<gene>
    <name evidence="1" type="primary">hisI</name>
</gene>
<accession>Q43925</accession>
<sequence length="133" mass="15416">MKDWLDEIHWNADGLVPAIAQDHKTGRILMMAWMNRESLALTVRENRAIYWSRSRGKLWRKGEESGHLQKVHEVRLDCDADVIVLQVEQLGGIACHTGRESCFYRVFEDGAWKVVEPILKDPDAIYHAGHRHE</sequence>
<proteinExistence type="inferred from homology"/>
<evidence type="ECO:0000255" key="1">
    <source>
        <dbReference type="HAMAP-Rule" id="MF_01021"/>
    </source>
</evidence>
<protein>
    <recommendedName>
        <fullName evidence="1">Phosphoribosyl-AMP cyclohydrolase</fullName>
        <shortName evidence="1">PRA-CH</shortName>
        <ecNumber evidence="1">3.5.4.19</ecNumber>
    </recommendedName>
</protein>
<keyword id="KW-0028">Amino-acid biosynthesis</keyword>
<keyword id="KW-0963">Cytoplasm</keyword>
<keyword id="KW-0368">Histidine biosynthesis</keyword>
<keyword id="KW-0378">Hydrolase</keyword>
<keyword id="KW-0460">Magnesium</keyword>
<keyword id="KW-0479">Metal-binding</keyword>
<keyword id="KW-0862">Zinc</keyword>
<dbReference type="EC" id="3.5.4.19" evidence="1"/>
<dbReference type="EMBL" id="U48404">
    <property type="protein sequence ID" value="AAA92106.1"/>
    <property type="molecule type" value="Genomic_DNA"/>
</dbReference>
<dbReference type="SMR" id="Q43925"/>
<dbReference type="UniPathway" id="UPA00031">
    <property type="reaction ID" value="UER00008"/>
</dbReference>
<dbReference type="GO" id="GO:0005737">
    <property type="term" value="C:cytoplasm"/>
    <property type="evidence" value="ECO:0007669"/>
    <property type="project" value="UniProtKB-SubCell"/>
</dbReference>
<dbReference type="GO" id="GO:0000287">
    <property type="term" value="F:magnesium ion binding"/>
    <property type="evidence" value="ECO:0007669"/>
    <property type="project" value="UniProtKB-UniRule"/>
</dbReference>
<dbReference type="GO" id="GO:0004635">
    <property type="term" value="F:phosphoribosyl-AMP cyclohydrolase activity"/>
    <property type="evidence" value="ECO:0007669"/>
    <property type="project" value="UniProtKB-UniRule"/>
</dbReference>
<dbReference type="GO" id="GO:0008270">
    <property type="term" value="F:zinc ion binding"/>
    <property type="evidence" value="ECO:0007669"/>
    <property type="project" value="UniProtKB-UniRule"/>
</dbReference>
<dbReference type="GO" id="GO:0000105">
    <property type="term" value="P:L-histidine biosynthetic process"/>
    <property type="evidence" value="ECO:0007669"/>
    <property type="project" value="UniProtKB-UniRule"/>
</dbReference>
<dbReference type="FunFam" id="3.10.20.810:FF:000001">
    <property type="entry name" value="Histidine biosynthesis bifunctional protein HisIE"/>
    <property type="match status" value="1"/>
</dbReference>
<dbReference type="Gene3D" id="3.10.20.810">
    <property type="entry name" value="Phosphoribosyl-AMP cyclohydrolase"/>
    <property type="match status" value="1"/>
</dbReference>
<dbReference type="HAMAP" id="MF_01021">
    <property type="entry name" value="HisI"/>
    <property type="match status" value="1"/>
</dbReference>
<dbReference type="InterPro" id="IPR026660">
    <property type="entry name" value="PRA-CH"/>
</dbReference>
<dbReference type="InterPro" id="IPR002496">
    <property type="entry name" value="PRib_AMP_CycHydrolase_dom"/>
</dbReference>
<dbReference type="InterPro" id="IPR038019">
    <property type="entry name" value="PRib_AMP_CycHydrolase_sf"/>
</dbReference>
<dbReference type="NCBIfam" id="NF000768">
    <property type="entry name" value="PRK00051.1"/>
    <property type="match status" value="1"/>
</dbReference>
<dbReference type="PANTHER" id="PTHR42945">
    <property type="entry name" value="HISTIDINE BIOSYNTHESIS BIFUNCTIONAL PROTEIN"/>
    <property type="match status" value="1"/>
</dbReference>
<dbReference type="PANTHER" id="PTHR42945:SF1">
    <property type="entry name" value="HISTIDINE BIOSYNTHESIS BIFUNCTIONAL PROTEIN HIS7"/>
    <property type="match status" value="1"/>
</dbReference>
<dbReference type="Pfam" id="PF01502">
    <property type="entry name" value="PRA-CH"/>
    <property type="match status" value="1"/>
</dbReference>
<dbReference type="SUPFAM" id="SSF141734">
    <property type="entry name" value="HisI-like"/>
    <property type="match status" value="1"/>
</dbReference>
<organism>
    <name type="scientific">Azotobacter chroococcum mcd 1</name>
    <dbReference type="NCBI Taxonomy" id="355"/>
    <lineage>
        <taxon>Bacteria</taxon>
        <taxon>Pseudomonadati</taxon>
        <taxon>Pseudomonadota</taxon>
        <taxon>Gammaproteobacteria</taxon>
        <taxon>Pseudomonadales</taxon>
        <taxon>Pseudomonadaceae</taxon>
        <taxon>Azotobacter</taxon>
    </lineage>
</organism>
<comment type="function">
    <text evidence="1">Catalyzes the hydrolysis of the adenine ring of phosphoribosyl-AMP.</text>
</comment>
<comment type="catalytic activity">
    <reaction evidence="1">
        <text>1-(5-phospho-beta-D-ribosyl)-5'-AMP + H2O = 1-(5-phospho-beta-D-ribosyl)-5-[(5-phospho-beta-D-ribosylamino)methylideneamino]imidazole-4-carboxamide</text>
        <dbReference type="Rhea" id="RHEA:20049"/>
        <dbReference type="ChEBI" id="CHEBI:15377"/>
        <dbReference type="ChEBI" id="CHEBI:58435"/>
        <dbReference type="ChEBI" id="CHEBI:59457"/>
        <dbReference type="EC" id="3.5.4.19"/>
    </reaction>
</comment>
<comment type="cofactor">
    <cofactor evidence="1">
        <name>Mg(2+)</name>
        <dbReference type="ChEBI" id="CHEBI:18420"/>
    </cofactor>
    <text evidence="1">Binds 1 Mg(2+) ion per subunit.</text>
</comment>
<comment type="cofactor">
    <cofactor evidence="1">
        <name>Zn(2+)</name>
        <dbReference type="ChEBI" id="CHEBI:29105"/>
    </cofactor>
    <text evidence="1">Binds 1 zinc ion per subunit.</text>
</comment>
<comment type="pathway">
    <text evidence="1">Amino-acid biosynthesis; L-histidine biosynthesis; L-histidine from 5-phospho-alpha-D-ribose 1-diphosphate: step 3/9.</text>
</comment>
<comment type="subunit">
    <text evidence="1">Homodimer.</text>
</comment>
<comment type="subcellular location">
    <subcellularLocation>
        <location evidence="1">Cytoplasm</location>
    </subcellularLocation>
</comment>
<comment type="similarity">
    <text evidence="1">Belongs to the PRA-CH family.</text>
</comment>
<feature type="chain" id="PRO_0000136457" description="Phosphoribosyl-AMP cyclohydrolase">
    <location>
        <begin position="1"/>
        <end position="133"/>
    </location>
</feature>
<feature type="binding site" evidence="1">
    <location>
        <position position="77"/>
    </location>
    <ligand>
        <name>Mg(2+)</name>
        <dbReference type="ChEBI" id="CHEBI:18420"/>
    </ligand>
</feature>
<feature type="binding site" evidence="1">
    <location>
        <position position="78"/>
    </location>
    <ligand>
        <name>Zn(2+)</name>
        <dbReference type="ChEBI" id="CHEBI:29105"/>
        <note>ligand shared between dimeric partners</note>
    </ligand>
</feature>
<feature type="binding site" evidence="1">
    <location>
        <position position="79"/>
    </location>
    <ligand>
        <name>Mg(2+)</name>
        <dbReference type="ChEBI" id="CHEBI:18420"/>
    </ligand>
</feature>
<feature type="binding site" evidence="1">
    <location>
        <position position="81"/>
    </location>
    <ligand>
        <name>Mg(2+)</name>
        <dbReference type="ChEBI" id="CHEBI:18420"/>
    </ligand>
</feature>
<feature type="binding site" evidence="1">
    <location>
        <position position="95"/>
    </location>
    <ligand>
        <name>Zn(2+)</name>
        <dbReference type="ChEBI" id="CHEBI:29105"/>
        <note>ligand shared between dimeric partners</note>
    </ligand>
</feature>
<feature type="binding site" evidence="1">
    <location>
        <position position="102"/>
    </location>
    <ligand>
        <name>Zn(2+)</name>
        <dbReference type="ChEBI" id="CHEBI:29105"/>
        <note>ligand shared between dimeric partners</note>
    </ligand>
</feature>
<name>HIS3_AZOCH</name>
<reference key="1">
    <citation type="submission" date="1996-02" db="EMBL/GenBank/DDBJ databases">
        <authorList>
            <person name="Yates M."/>
            <person name="Souza E.M."/>
        </authorList>
    </citation>
    <scope>NUCLEOTIDE SEQUENCE [GENOMIC DNA]</scope>
</reference>